<accession>Q48V46</accession>
<evidence type="ECO:0000255" key="1">
    <source>
        <dbReference type="HAMAP-Rule" id="MF_01817"/>
    </source>
</evidence>
<evidence type="ECO:0000255" key="2">
    <source>
        <dbReference type="PROSITE-ProRule" id="PRU01246"/>
    </source>
</evidence>
<evidence type="ECO:0000255" key="3">
    <source>
        <dbReference type="PROSITE-ProRule" id="PRU01248"/>
    </source>
</evidence>
<sequence length="248" mass="28803">MKSYIEPFIASKALSQNSQKAYRYDLQQFCQLIGERVNQDKLLLYQNSIANLSLSAKKRKLSTANQFLYYLYQIKYLNSYFRLTDTMKVMRTEKQQAAIINTDIFYQKTPFVWGQLISLLILELGLTPSEVAGIEVANLDLNFQMLTLKTKKGVRVLPLSQILIPFLEQQLVGKEAYLFEHRGIPFSRQWFFNHLKTFVRSIGYEGLTAQKLREQFILKEKLAGKSIIELSDILGLKSPVTLEKYYKS</sequence>
<feature type="chain" id="PRO_1000070260" description="Tyrosine recombinase XerD-like">
    <location>
        <begin position="1"/>
        <end position="248"/>
    </location>
</feature>
<feature type="domain" description="Core-binding (CB)" evidence="3">
    <location>
        <begin position="1"/>
        <end position="72"/>
    </location>
</feature>
<feature type="domain" description="Tyr recombinase" evidence="2">
    <location>
        <begin position="85"/>
        <end position="248"/>
    </location>
</feature>
<feature type="active site" evidence="2">
    <location>
        <position position="149"/>
    </location>
</feature>
<feature type="active site" evidence="2">
    <location>
        <position position="213"/>
    </location>
</feature>
<feature type="active site" description="O-(3'-phospho-DNA)-tyrosine intermediate" evidence="2">
    <location>
        <position position="245"/>
    </location>
</feature>
<dbReference type="EMBL" id="CP000056">
    <property type="protein sequence ID" value="AAX71410.1"/>
    <property type="molecule type" value="Genomic_DNA"/>
</dbReference>
<dbReference type="RefSeq" id="WP_011284525.1">
    <property type="nucleotide sequence ID" value="NC_007296.2"/>
</dbReference>
<dbReference type="SMR" id="Q48V46"/>
<dbReference type="KEGG" id="spb:M28_Spy0296"/>
<dbReference type="HOGENOM" id="CLU_1128554_0_0_9"/>
<dbReference type="GO" id="GO:0005737">
    <property type="term" value="C:cytoplasm"/>
    <property type="evidence" value="ECO:0007669"/>
    <property type="project" value="UniProtKB-SubCell"/>
</dbReference>
<dbReference type="GO" id="GO:0003677">
    <property type="term" value="F:DNA binding"/>
    <property type="evidence" value="ECO:0007669"/>
    <property type="project" value="UniProtKB-KW"/>
</dbReference>
<dbReference type="GO" id="GO:0009037">
    <property type="term" value="F:tyrosine-based site-specific recombinase activity"/>
    <property type="evidence" value="ECO:0007669"/>
    <property type="project" value="UniProtKB-UniRule"/>
</dbReference>
<dbReference type="GO" id="GO:0006313">
    <property type="term" value="P:DNA transposition"/>
    <property type="evidence" value="ECO:0007669"/>
    <property type="project" value="UniProtKB-UniRule"/>
</dbReference>
<dbReference type="CDD" id="cd01190">
    <property type="entry name" value="INT_StrepXerD_C_like"/>
    <property type="match status" value="1"/>
</dbReference>
<dbReference type="Gene3D" id="1.10.150.130">
    <property type="match status" value="1"/>
</dbReference>
<dbReference type="Gene3D" id="1.10.443.10">
    <property type="entry name" value="Intergrase catalytic core"/>
    <property type="match status" value="1"/>
</dbReference>
<dbReference type="HAMAP" id="MF_01817">
    <property type="entry name" value="Recomb_XerD_like"/>
    <property type="match status" value="1"/>
</dbReference>
<dbReference type="InterPro" id="IPR044068">
    <property type="entry name" value="CB"/>
</dbReference>
<dbReference type="InterPro" id="IPR011010">
    <property type="entry name" value="DNA_brk_join_enz"/>
</dbReference>
<dbReference type="InterPro" id="IPR013762">
    <property type="entry name" value="Integrase-like_cat_sf"/>
</dbReference>
<dbReference type="InterPro" id="IPR002104">
    <property type="entry name" value="Integrase_catalytic"/>
</dbReference>
<dbReference type="InterPro" id="IPR010998">
    <property type="entry name" value="Integrase_recombinase_N"/>
</dbReference>
<dbReference type="InterPro" id="IPR020876">
    <property type="entry name" value="Tyrosine_recombinase_XerD-like"/>
</dbReference>
<dbReference type="NCBIfam" id="NF002685">
    <property type="entry name" value="PRK02436.1"/>
    <property type="match status" value="1"/>
</dbReference>
<dbReference type="Pfam" id="PF00589">
    <property type="entry name" value="Phage_integrase"/>
    <property type="match status" value="1"/>
</dbReference>
<dbReference type="SUPFAM" id="SSF56349">
    <property type="entry name" value="DNA breaking-rejoining enzymes"/>
    <property type="match status" value="1"/>
</dbReference>
<dbReference type="PROSITE" id="PS51900">
    <property type="entry name" value="CB"/>
    <property type="match status" value="1"/>
</dbReference>
<dbReference type="PROSITE" id="PS51898">
    <property type="entry name" value="TYR_RECOMBINASE"/>
    <property type="match status" value="1"/>
</dbReference>
<keyword id="KW-0963">Cytoplasm</keyword>
<keyword id="KW-0229">DNA integration</keyword>
<keyword id="KW-0233">DNA recombination</keyword>
<keyword id="KW-0238">DNA-binding</keyword>
<gene>
    <name type="ordered locus">M28_Spy0296</name>
</gene>
<reference key="1">
    <citation type="journal article" date="2005" name="J. Infect. Dis.">
        <title>Genome sequence of a serotype M28 strain of group A Streptococcus: potential new insights into puerperal sepsis and bacterial disease specificity.</title>
        <authorList>
            <person name="Green N.M."/>
            <person name="Zhang S."/>
            <person name="Porcella S.F."/>
            <person name="Nagiec M.J."/>
            <person name="Barbian K.D."/>
            <person name="Beres S.B."/>
            <person name="Lefebvre R.B."/>
            <person name="Musser J.M."/>
        </authorList>
    </citation>
    <scope>NUCLEOTIDE SEQUENCE [LARGE SCALE GENOMIC DNA]</scope>
    <source>
        <strain>MGAS6180</strain>
    </source>
</reference>
<comment type="function">
    <text evidence="1">Putative tyrosine recombinase. Not involved in the cutting and rejoining of the recombining DNA molecules on dif(SL) site.</text>
</comment>
<comment type="subcellular location">
    <subcellularLocation>
        <location evidence="1">Cytoplasm</location>
    </subcellularLocation>
</comment>
<comment type="similarity">
    <text evidence="1">Belongs to the 'phage' integrase family. XerD-like subfamily.</text>
</comment>
<name>XERDL_STRPM</name>
<protein>
    <recommendedName>
        <fullName evidence="1">Tyrosine recombinase XerD-like</fullName>
    </recommendedName>
</protein>
<proteinExistence type="inferred from homology"/>
<organism>
    <name type="scientific">Streptococcus pyogenes serotype M28 (strain MGAS6180)</name>
    <dbReference type="NCBI Taxonomy" id="319701"/>
    <lineage>
        <taxon>Bacteria</taxon>
        <taxon>Bacillati</taxon>
        <taxon>Bacillota</taxon>
        <taxon>Bacilli</taxon>
        <taxon>Lactobacillales</taxon>
        <taxon>Streptococcaceae</taxon>
        <taxon>Streptococcus</taxon>
    </lineage>
</organism>